<keyword id="KW-1185">Reference proteome</keyword>
<protein>
    <recommendedName>
        <fullName evidence="1">UPF0371 protein FN1121</fullName>
    </recommendedName>
</protein>
<gene>
    <name type="ordered locus">FN1121</name>
</gene>
<dbReference type="EMBL" id="AE009951">
    <property type="protein sequence ID" value="AAL95317.1"/>
    <property type="molecule type" value="Genomic_DNA"/>
</dbReference>
<dbReference type="RefSeq" id="NP_604018.1">
    <property type="nucleotide sequence ID" value="NC_003454.1"/>
</dbReference>
<dbReference type="RefSeq" id="WP_005902867.1">
    <property type="nucleotide sequence ID" value="NZ_OZ209243.1"/>
</dbReference>
<dbReference type="SMR" id="Q8REI1"/>
<dbReference type="STRING" id="190304.FN1121"/>
<dbReference type="PaxDb" id="190304-FN1121"/>
<dbReference type="EnsemblBacteria" id="AAL95317">
    <property type="protein sequence ID" value="AAL95317"/>
    <property type="gene ID" value="FN1121"/>
</dbReference>
<dbReference type="KEGG" id="fnu:FN1121"/>
<dbReference type="PATRIC" id="fig|190304.8.peg.1686"/>
<dbReference type="eggNOG" id="COG4868">
    <property type="taxonomic scope" value="Bacteria"/>
</dbReference>
<dbReference type="HOGENOM" id="CLU_046981_0_0_0"/>
<dbReference type="InParanoid" id="Q8REI1"/>
<dbReference type="BioCyc" id="FNUC190304:G1FZS-1701-MONOMER"/>
<dbReference type="Proteomes" id="UP000002521">
    <property type="component" value="Chromosome"/>
</dbReference>
<dbReference type="Gene3D" id="1.20.1570.10">
    <property type="entry name" value="dip2346 domain like"/>
    <property type="match status" value="1"/>
</dbReference>
<dbReference type="Gene3D" id="3.10.630.10">
    <property type="entry name" value="dip2346 domain like"/>
    <property type="match status" value="1"/>
</dbReference>
<dbReference type="Gene3D" id="3.40.140.40">
    <property type="entry name" value="Domain of unknown function (DUF1846), C-terminal subdomain"/>
    <property type="match status" value="1"/>
</dbReference>
<dbReference type="HAMAP" id="MF_01567">
    <property type="entry name" value="UPF0371"/>
    <property type="match status" value="1"/>
</dbReference>
<dbReference type="InterPro" id="IPR014999">
    <property type="entry name" value="DUF1846"/>
</dbReference>
<dbReference type="InterPro" id="IPR048441">
    <property type="entry name" value="DUF1846_C"/>
</dbReference>
<dbReference type="InterPro" id="IPR048496">
    <property type="entry name" value="DUF1846_N"/>
</dbReference>
<dbReference type="NCBIfam" id="NF010184">
    <property type="entry name" value="PRK13663.1"/>
    <property type="match status" value="1"/>
</dbReference>
<dbReference type="Pfam" id="PF08903">
    <property type="entry name" value="DUF1846"/>
    <property type="match status" value="1"/>
</dbReference>
<dbReference type="Pfam" id="PF20921">
    <property type="entry name" value="DUF1846_C"/>
    <property type="match status" value="1"/>
</dbReference>
<dbReference type="PIRSF" id="PIRSF033132">
    <property type="entry name" value="DUF1846"/>
    <property type="match status" value="1"/>
</dbReference>
<sequence length="506" mass="57758">MKIGFNHEKYLEEQSKYILERVNNHDKLYIEFGGKLLADLHAKRVLPGFDENAKIKVLNKLKDKIEVIICVYAGDIERNKIRGDFGITYDMDVFRLIDDLRENDLKVNSVVITRYEDRPSTALFITRLERRGIKVYRHFATKGYPSDVDTIVSDEGYGKNAYIETTKPIVVVTAPGPGSGKLATCLSQLYHEYKRGKDVGYSKFETFPVWNVPLKHPLNIAYEAATVDLNDVNMIDPFHLEEYGEIAVNYNRDIEAFPLLKRIIEKITGKKSIYQSPTDMGVNRVGFGITDDEVVRKASEQEIIRRYFKTGCDYKKGNTDLETFKRSEFIMHSLGLKEEDRKVVTFARKKLELLNQEKDDKNDKQKTLSAIAFEMPDGKIITGKKSSLMDAPSAAILNSLKYLSNFDDELLLISPTILEPIIKLKEKTLKNRYIPLDCEEILIALSITAATNPMAEVALSKLSQLEGVQAHSTHILGRNDEQYLRKLGIDVTSDQVFPTENLYYNQ</sequence>
<proteinExistence type="inferred from homology"/>
<feature type="chain" id="PRO_0000245619" description="UPF0371 protein FN1121">
    <location>
        <begin position="1"/>
        <end position="506"/>
    </location>
</feature>
<organism>
    <name type="scientific">Fusobacterium nucleatum subsp. nucleatum (strain ATCC 25586 / DSM 15643 / BCRC 10681 / CIP 101130 / JCM 8532 / KCTC 2640 / LMG 13131 / VPI 4355)</name>
    <dbReference type="NCBI Taxonomy" id="190304"/>
    <lineage>
        <taxon>Bacteria</taxon>
        <taxon>Fusobacteriati</taxon>
        <taxon>Fusobacteriota</taxon>
        <taxon>Fusobacteriia</taxon>
        <taxon>Fusobacteriales</taxon>
        <taxon>Fusobacteriaceae</taxon>
        <taxon>Fusobacterium</taxon>
    </lineage>
</organism>
<name>Y1121_FUSNN</name>
<reference key="1">
    <citation type="journal article" date="2002" name="J. Bacteriol.">
        <title>Genome sequence and analysis of the oral bacterium Fusobacterium nucleatum strain ATCC 25586.</title>
        <authorList>
            <person name="Kapatral V."/>
            <person name="Anderson I."/>
            <person name="Ivanova N."/>
            <person name="Reznik G."/>
            <person name="Los T."/>
            <person name="Lykidis A."/>
            <person name="Bhattacharyya A."/>
            <person name="Bartman A."/>
            <person name="Gardner W."/>
            <person name="Grechkin G."/>
            <person name="Zhu L."/>
            <person name="Vasieva O."/>
            <person name="Chu L."/>
            <person name="Kogan Y."/>
            <person name="Chaga O."/>
            <person name="Goltsman E."/>
            <person name="Bernal A."/>
            <person name="Larsen N."/>
            <person name="D'Souza M."/>
            <person name="Walunas T."/>
            <person name="Pusch G."/>
            <person name="Haselkorn R."/>
            <person name="Fonstein M."/>
            <person name="Kyrpides N.C."/>
            <person name="Overbeek R."/>
        </authorList>
    </citation>
    <scope>NUCLEOTIDE SEQUENCE [LARGE SCALE GENOMIC DNA]</scope>
    <source>
        <strain>ATCC 25586 / DSM 15643 / BCRC 10681 / CIP 101130 / JCM 8532 / KCTC 2640 / LMG 13131 / VPI 4355</strain>
    </source>
</reference>
<accession>Q8REI1</accession>
<comment type="similarity">
    <text evidence="1">Belongs to the UPF0371 family.</text>
</comment>
<evidence type="ECO:0000255" key="1">
    <source>
        <dbReference type="HAMAP-Rule" id="MF_01567"/>
    </source>
</evidence>